<evidence type="ECO:0000255" key="1"/>
<evidence type="ECO:0000269" key="2">
    <source>
    </source>
</evidence>
<evidence type="ECO:0000269" key="3">
    <source>
    </source>
</evidence>
<evidence type="ECO:0000269" key="4">
    <source>
    </source>
</evidence>
<evidence type="ECO:0000303" key="5">
    <source>
    </source>
</evidence>
<evidence type="ECO:0000303" key="6">
    <source>
    </source>
</evidence>
<evidence type="ECO:0000305" key="7"/>
<evidence type="ECO:0000312" key="8">
    <source>
        <dbReference type="Araport" id="AT4G27110"/>
    </source>
</evidence>
<evidence type="ECO:0000312" key="9">
    <source>
        <dbReference type="EMBL" id="CAB38841.1"/>
    </source>
</evidence>
<proteinExistence type="evidence at transcript level"/>
<gene>
    <name evidence="5" type="primary">COBL11</name>
    <name evidence="6" type="synonym">PSG4</name>
    <name evidence="8" type="ordered locus">At4g27110</name>
    <name evidence="9" type="ORF">T24A18.60</name>
</gene>
<comment type="function">
    <text evidence="3">Involved in the deposition of apical pectin cap and cellulose microfibrils in pollen tubes (PubMed:23384085). Implicated in pollen tubes growth in the female transmitting tract of pistil and toward micropyles, via the perception of ovule guidance cues (PubMed:23384085).</text>
</comment>
<comment type="subcellular location">
    <subcellularLocation>
        <location evidence="3">Cell membrane</location>
        <topology evidence="1">Lipid-anchor</topology>
        <topology evidence="1">GPI-anchor</topology>
    </subcellularLocation>
    <text evidence="3">Localized at the apical plasma membrane of pollen tubes (PubMed:23384085). In the cytoplasm, observed in motile punctate vesicles (PubMed:23384085).</text>
</comment>
<comment type="tissue specificity">
    <text evidence="2 4">Mostly expressed in flowers, stamen, anthers and pollen, and, to a lower extent, possibly in roots, stems, leaves and siliques.</text>
</comment>
<comment type="similarity">
    <text evidence="7">Belongs to the COBRA family.</text>
</comment>
<comment type="sequence caution" evidence="7">
    <conflict type="erroneous initiation">
        <sequence resource="EMBL-CDS" id="CAB38841"/>
    </conflict>
    <text>Extended N-terminus.</text>
</comment>
<comment type="sequence caution" evidence="7">
    <conflict type="erroneous initiation">
        <sequence resource="EMBL-CDS" id="CAB79566"/>
    </conflict>
    <text>Extended N-terminus.</text>
</comment>
<feature type="signal peptide" evidence="1">
    <location>
        <begin position="1"/>
        <end position="29"/>
    </location>
</feature>
<feature type="chain" id="PRO_0000005589" description="COBRA-like protein 11">
    <location>
        <begin position="30"/>
        <end position="636"/>
    </location>
</feature>
<feature type="propeptide" id="PRO_0000005590" description="Removed in mature form" evidence="1">
    <location>
        <begin position="637"/>
        <end position="668"/>
    </location>
</feature>
<feature type="lipid moiety-binding region" description="GPI-anchor amidated serine" evidence="1">
    <location>
        <position position="636"/>
    </location>
</feature>
<feature type="glycosylation site" description="N-linked (GlcNAc...) asparagine" evidence="1">
    <location>
        <position position="69"/>
    </location>
</feature>
<feature type="glycosylation site" description="N-linked (GlcNAc...) asparagine" evidence="1">
    <location>
        <position position="125"/>
    </location>
</feature>
<feature type="glycosylation site" description="N-linked (GlcNAc...) asparagine" evidence="1">
    <location>
        <position position="254"/>
    </location>
</feature>
<feature type="glycosylation site" description="N-linked (GlcNAc...) asparagine" evidence="1">
    <location>
        <position position="318"/>
    </location>
</feature>
<feature type="glycosylation site" description="N-linked (GlcNAc...) asparagine" evidence="1">
    <location>
        <position position="329"/>
    </location>
</feature>
<feature type="glycosylation site" description="N-linked (GlcNAc...) asparagine" evidence="1">
    <location>
        <position position="358"/>
    </location>
</feature>
<feature type="glycosylation site" description="N-linked (GlcNAc...) asparagine" evidence="1">
    <location>
        <position position="412"/>
    </location>
</feature>
<feature type="glycosylation site" description="N-linked (GlcNAc...) asparagine" evidence="1">
    <location>
        <position position="432"/>
    </location>
</feature>
<feature type="glycosylation site" description="N-linked (GlcNAc...) asparagine" evidence="1">
    <location>
        <position position="473"/>
    </location>
</feature>
<feature type="glycosylation site" description="N-linked (GlcNAc...) asparagine" evidence="1">
    <location>
        <position position="552"/>
    </location>
</feature>
<feature type="glycosylation site" description="N-linked (GlcNAc...) asparagine" evidence="1">
    <location>
        <position position="560"/>
    </location>
</feature>
<feature type="glycosylation site" description="N-linked (GlcNAc...) asparagine" evidence="1">
    <location>
        <position position="579"/>
    </location>
</feature>
<accession>Q9T045</accession>
<accession>Q67ZQ4</accession>
<keyword id="KW-1003">Cell membrane</keyword>
<keyword id="KW-0325">Glycoprotein</keyword>
<keyword id="KW-0336">GPI-anchor</keyword>
<keyword id="KW-0449">Lipoprotein</keyword>
<keyword id="KW-0472">Membrane</keyword>
<keyword id="KW-1185">Reference proteome</keyword>
<keyword id="KW-0732">Signal</keyword>
<reference key="1">
    <citation type="journal article" date="1999" name="Nature">
        <title>Sequence and analysis of chromosome 4 of the plant Arabidopsis thaliana.</title>
        <authorList>
            <person name="Mayer K.F.X."/>
            <person name="Schueller C."/>
            <person name="Wambutt R."/>
            <person name="Murphy G."/>
            <person name="Volckaert G."/>
            <person name="Pohl T."/>
            <person name="Duesterhoeft A."/>
            <person name="Stiekema W."/>
            <person name="Entian K.-D."/>
            <person name="Terryn N."/>
            <person name="Harris B."/>
            <person name="Ansorge W."/>
            <person name="Brandt P."/>
            <person name="Grivell L.A."/>
            <person name="Rieger M."/>
            <person name="Weichselgartner M."/>
            <person name="de Simone V."/>
            <person name="Obermaier B."/>
            <person name="Mache R."/>
            <person name="Mueller M."/>
            <person name="Kreis M."/>
            <person name="Delseny M."/>
            <person name="Puigdomenech P."/>
            <person name="Watson M."/>
            <person name="Schmidtheini T."/>
            <person name="Reichert B."/>
            <person name="Portetelle D."/>
            <person name="Perez-Alonso M."/>
            <person name="Boutry M."/>
            <person name="Bancroft I."/>
            <person name="Vos P."/>
            <person name="Hoheisel J."/>
            <person name="Zimmermann W."/>
            <person name="Wedler H."/>
            <person name="Ridley P."/>
            <person name="Langham S.-A."/>
            <person name="McCullagh B."/>
            <person name="Bilham L."/>
            <person name="Robben J."/>
            <person name="van der Schueren J."/>
            <person name="Grymonprez B."/>
            <person name="Chuang Y.-J."/>
            <person name="Vandenbussche F."/>
            <person name="Braeken M."/>
            <person name="Weltjens I."/>
            <person name="Voet M."/>
            <person name="Bastiaens I."/>
            <person name="Aert R."/>
            <person name="Defoor E."/>
            <person name="Weitzenegger T."/>
            <person name="Bothe G."/>
            <person name="Ramsperger U."/>
            <person name="Hilbert H."/>
            <person name="Braun M."/>
            <person name="Holzer E."/>
            <person name="Brandt A."/>
            <person name="Peters S."/>
            <person name="van Staveren M."/>
            <person name="Dirkse W."/>
            <person name="Mooijman P."/>
            <person name="Klein Lankhorst R."/>
            <person name="Rose M."/>
            <person name="Hauf J."/>
            <person name="Koetter P."/>
            <person name="Berneiser S."/>
            <person name="Hempel S."/>
            <person name="Feldpausch M."/>
            <person name="Lamberth S."/>
            <person name="Van den Daele H."/>
            <person name="De Keyser A."/>
            <person name="Buysshaert C."/>
            <person name="Gielen J."/>
            <person name="Villarroel R."/>
            <person name="De Clercq R."/>
            <person name="van Montagu M."/>
            <person name="Rogers J."/>
            <person name="Cronin A."/>
            <person name="Quail M.A."/>
            <person name="Bray-Allen S."/>
            <person name="Clark L."/>
            <person name="Doggett J."/>
            <person name="Hall S."/>
            <person name="Kay M."/>
            <person name="Lennard N."/>
            <person name="McLay K."/>
            <person name="Mayes R."/>
            <person name="Pettett A."/>
            <person name="Rajandream M.A."/>
            <person name="Lyne M."/>
            <person name="Benes V."/>
            <person name="Rechmann S."/>
            <person name="Borkova D."/>
            <person name="Bloecker H."/>
            <person name="Scharfe M."/>
            <person name="Grimm M."/>
            <person name="Loehnert T.-H."/>
            <person name="Dose S."/>
            <person name="de Haan M."/>
            <person name="Maarse A.C."/>
            <person name="Schaefer M."/>
            <person name="Mueller-Auer S."/>
            <person name="Gabel C."/>
            <person name="Fuchs M."/>
            <person name="Fartmann B."/>
            <person name="Granderath K."/>
            <person name="Dauner D."/>
            <person name="Herzl A."/>
            <person name="Neumann S."/>
            <person name="Argiriou A."/>
            <person name="Vitale D."/>
            <person name="Liguori R."/>
            <person name="Piravandi E."/>
            <person name="Massenet O."/>
            <person name="Quigley F."/>
            <person name="Clabauld G."/>
            <person name="Muendlein A."/>
            <person name="Felber R."/>
            <person name="Schnabl S."/>
            <person name="Hiller R."/>
            <person name="Schmidt W."/>
            <person name="Lecharny A."/>
            <person name="Aubourg S."/>
            <person name="Chefdor F."/>
            <person name="Cooke R."/>
            <person name="Berger C."/>
            <person name="Monfort A."/>
            <person name="Casacuberta E."/>
            <person name="Gibbons T."/>
            <person name="Weber N."/>
            <person name="Vandenbol M."/>
            <person name="Bargues M."/>
            <person name="Terol J."/>
            <person name="Torres A."/>
            <person name="Perez-Perez A."/>
            <person name="Purnelle B."/>
            <person name="Bent E."/>
            <person name="Johnson S."/>
            <person name="Tacon D."/>
            <person name="Jesse T."/>
            <person name="Heijnen L."/>
            <person name="Schwarz S."/>
            <person name="Scholler P."/>
            <person name="Heber S."/>
            <person name="Francs P."/>
            <person name="Bielke C."/>
            <person name="Frishman D."/>
            <person name="Haase D."/>
            <person name="Lemcke K."/>
            <person name="Mewes H.-W."/>
            <person name="Stocker S."/>
            <person name="Zaccaria P."/>
            <person name="Bevan M."/>
            <person name="Wilson R.K."/>
            <person name="de la Bastide M."/>
            <person name="Habermann K."/>
            <person name="Parnell L."/>
            <person name="Dedhia N."/>
            <person name="Gnoj L."/>
            <person name="Schutz K."/>
            <person name="Huang E."/>
            <person name="Spiegel L."/>
            <person name="Sekhon M."/>
            <person name="Murray J."/>
            <person name="Sheet P."/>
            <person name="Cordes M."/>
            <person name="Abu-Threideh J."/>
            <person name="Stoneking T."/>
            <person name="Kalicki J."/>
            <person name="Graves T."/>
            <person name="Harmon G."/>
            <person name="Edwards J."/>
            <person name="Latreille P."/>
            <person name="Courtney L."/>
            <person name="Cloud J."/>
            <person name="Abbott A."/>
            <person name="Scott K."/>
            <person name="Johnson D."/>
            <person name="Minx P."/>
            <person name="Bentley D."/>
            <person name="Fulton B."/>
            <person name="Miller N."/>
            <person name="Greco T."/>
            <person name="Kemp K."/>
            <person name="Kramer J."/>
            <person name="Fulton L."/>
            <person name="Mardis E."/>
            <person name="Dante M."/>
            <person name="Pepin K."/>
            <person name="Hillier L.W."/>
            <person name="Nelson J."/>
            <person name="Spieth J."/>
            <person name="Ryan E."/>
            <person name="Andrews S."/>
            <person name="Geisel C."/>
            <person name="Layman D."/>
            <person name="Du H."/>
            <person name="Ali J."/>
            <person name="Berghoff A."/>
            <person name="Jones K."/>
            <person name="Drone K."/>
            <person name="Cotton M."/>
            <person name="Joshu C."/>
            <person name="Antonoiu B."/>
            <person name="Zidanic M."/>
            <person name="Strong C."/>
            <person name="Sun H."/>
            <person name="Lamar B."/>
            <person name="Yordan C."/>
            <person name="Ma P."/>
            <person name="Zhong J."/>
            <person name="Preston R."/>
            <person name="Vil D."/>
            <person name="Shekher M."/>
            <person name="Matero A."/>
            <person name="Shah R."/>
            <person name="Swaby I.K."/>
            <person name="O'Shaughnessy A."/>
            <person name="Rodriguez M."/>
            <person name="Hoffman J."/>
            <person name="Till S."/>
            <person name="Granat S."/>
            <person name="Shohdy N."/>
            <person name="Hasegawa A."/>
            <person name="Hameed A."/>
            <person name="Lodhi M."/>
            <person name="Johnson A."/>
            <person name="Chen E."/>
            <person name="Marra M.A."/>
            <person name="Martienssen R."/>
            <person name="McCombie W.R."/>
        </authorList>
    </citation>
    <scope>NUCLEOTIDE SEQUENCE [LARGE SCALE GENOMIC DNA]</scope>
    <source>
        <strain>cv. Columbia</strain>
    </source>
</reference>
<reference key="2">
    <citation type="journal article" date="2017" name="Plant J.">
        <title>Araport11: a complete reannotation of the Arabidopsis thaliana reference genome.</title>
        <authorList>
            <person name="Cheng C.Y."/>
            <person name="Krishnakumar V."/>
            <person name="Chan A.P."/>
            <person name="Thibaud-Nissen F."/>
            <person name="Schobel S."/>
            <person name="Town C.D."/>
        </authorList>
    </citation>
    <scope>GENOME REANNOTATION</scope>
    <source>
        <strain>cv. Columbia</strain>
    </source>
</reference>
<reference key="3">
    <citation type="submission" date="2004-09" db="EMBL/GenBank/DDBJ databases">
        <title>Large-scale analysis of RIKEN Arabidopsis full-length (RAFL) cDNAs.</title>
        <authorList>
            <person name="Totoki Y."/>
            <person name="Seki M."/>
            <person name="Ishida J."/>
            <person name="Nakajima M."/>
            <person name="Enju A."/>
            <person name="Kamiya A."/>
            <person name="Narusaka M."/>
            <person name="Shin-i T."/>
            <person name="Nakagawa M."/>
            <person name="Sakamoto N."/>
            <person name="Oishi K."/>
            <person name="Kohara Y."/>
            <person name="Kobayashi M."/>
            <person name="Toyoda A."/>
            <person name="Sakaki Y."/>
            <person name="Sakurai T."/>
            <person name="Iida K."/>
            <person name="Akiyama K."/>
            <person name="Satou M."/>
            <person name="Toyoda T."/>
            <person name="Konagaya A."/>
            <person name="Carninci P."/>
            <person name="Kawai J."/>
            <person name="Hayashizaki Y."/>
            <person name="Shinozaki K."/>
        </authorList>
    </citation>
    <scope>NUCLEOTIDE SEQUENCE [LARGE SCALE MRNA]</scope>
    <source>
        <strain>cv. Columbia</strain>
    </source>
</reference>
<reference key="4">
    <citation type="journal article" date="2002" name="Plant Physiol.">
        <title>The COBRA family of putative GPI-anchored proteins in Arabidopsis. A new fellowship in expansion.</title>
        <authorList>
            <person name="Roudier F."/>
            <person name="Schindelman G."/>
            <person name="DeSalle R."/>
            <person name="Benfey P.N."/>
        </authorList>
    </citation>
    <scope>TISSUE SPECIFICITY</scope>
</reference>
<reference key="5">
    <citation type="journal article" date="2013" name="Plant J.">
        <title>Arabidopsis COBRA-LIKE 10, a GPI-anchored protein, mediates directional growth of pollen tubes.</title>
        <authorList>
            <person name="Li S."/>
            <person name="Ge F.-R."/>
            <person name="Xu M."/>
            <person name="Zhao X.-Y."/>
            <person name="Huang G.-Q."/>
            <person name="Zhou L.-Z."/>
            <person name="Wang J.-G."/>
            <person name="Kombrink A."/>
            <person name="McCormick S."/>
            <person name="Zhang X.S."/>
            <person name="Zhang Y."/>
        </authorList>
    </citation>
    <scope>FUNCTION</scope>
    <scope>SUBCELLULAR LOCATION</scope>
    <source>
        <strain>cv. Columbia</strain>
    </source>
</reference>
<reference key="6">
    <citation type="journal article" date="2014" name="Plant Physiol. Biochem.">
        <title>Identification of two highly specific pollen promoters using transcriptomic data.</title>
        <authorList>
            <person name="Munoz-Strale D."/>
            <person name="Leon G."/>
        </authorList>
    </citation>
    <scope>TISSUE SPECIFICITY</scope>
    <source>
        <strain>cv. Columbia</strain>
    </source>
</reference>
<organism>
    <name type="scientific">Arabidopsis thaliana</name>
    <name type="common">Mouse-ear cress</name>
    <dbReference type="NCBI Taxonomy" id="3702"/>
    <lineage>
        <taxon>Eukaryota</taxon>
        <taxon>Viridiplantae</taxon>
        <taxon>Streptophyta</taxon>
        <taxon>Embryophyta</taxon>
        <taxon>Tracheophyta</taxon>
        <taxon>Spermatophyta</taxon>
        <taxon>Magnoliopsida</taxon>
        <taxon>eudicotyledons</taxon>
        <taxon>Gunneridae</taxon>
        <taxon>Pentapetalae</taxon>
        <taxon>rosids</taxon>
        <taxon>malvids</taxon>
        <taxon>Brassicales</taxon>
        <taxon>Brassicaceae</taxon>
        <taxon>Camelineae</taxon>
        <taxon>Arabidopsis</taxon>
    </lineage>
</organism>
<name>CBL11_ARATH</name>
<sequence length="668" mass="73849">MKKLRYVHLNLLLLLLPLINLQFPTLSLAQDYDEPKKDDTPPPGLARCNGVYMSYSSGGREKLYPRTTNATAQAWSFKSTAMIVNTGIEEVKGWQMFVGFHHREIIVSATGAVSSDGDFPVDATNGTTFIGSQNTDLKTSILTAGDYTQISTNIEITGTVFGGKGTATPMPKSIKLTNDGWQCPAATSKGGTMQVCCKRNPKFKAKEKVKTKFMPRQHGDLNIIYDVLQAYASSYMAQVTIDNTSPLGRLDHWNLTWEWMRGEFIHSMRGAYAAEKNTLECLSSKAGQFYGDLDFSQVANCQKKPIIKDLPAERKDDNVTGKLPFCCKNGTLLPTHMDPSKSKAIFQLQVYKVPPDQNRTAFFPPRNWKIDGIVNPTYKCGPPIRVDATPFPDPSGLQATTYAIASWQVICNITKPKPQAARCCVSFSAFYNDSAIPCNTCACGCKDIDTDTCNANARQLLLPTDTLLVPFDNRTLKAKVWAKQKHMAYPKKLPCPDNCGISLNWHLNSDYGNGWSARVTLFNWGNNAVEDWFGALDLGKAGLGYENIYSFNGSRVPPKNQTIFFQGLPGMNYLIGITNGTNPARDPQIPGKMQSVISFKKKNLGSLNIIGGDGFPKRVFFNGEECELPKYFPKKSSGMRLSGIRFLPSILLAITTFHAITDRLLTGV</sequence>
<dbReference type="EMBL" id="AL035680">
    <property type="protein sequence ID" value="CAB38841.1"/>
    <property type="status" value="ALT_INIT"/>
    <property type="molecule type" value="Genomic_DNA"/>
</dbReference>
<dbReference type="EMBL" id="AL161566">
    <property type="protein sequence ID" value="CAB79566.1"/>
    <property type="status" value="ALT_INIT"/>
    <property type="molecule type" value="Genomic_DNA"/>
</dbReference>
<dbReference type="EMBL" id="CP002687">
    <property type="protein sequence ID" value="AEE85302.1"/>
    <property type="molecule type" value="Genomic_DNA"/>
</dbReference>
<dbReference type="EMBL" id="AK175703">
    <property type="protein sequence ID" value="BAD43466.1"/>
    <property type="molecule type" value="mRNA"/>
</dbReference>
<dbReference type="EMBL" id="AK176063">
    <property type="protein sequence ID" value="BAD43826.1"/>
    <property type="molecule type" value="mRNA"/>
</dbReference>
<dbReference type="PIR" id="T06041">
    <property type="entry name" value="T06041"/>
</dbReference>
<dbReference type="RefSeq" id="NP_567766.1">
    <property type="nucleotide sequence ID" value="NM_118845.3"/>
</dbReference>
<dbReference type="FunCoup" id="Q9T045">
    <property type="interactions" value="58"/>
</dbReference>
<dbReference type="STRING" id="3702.Q9T045"/>
<dbReference type="GlyCosmos" id="Q9T045">
    <property type="glycosylation" value="12 sites, No reported glycans"/>
</dbReference>
<dbReference type="GlyGen" id="Q9T045">
    <property type="glycosylation" value="12 sites"/>
</dbReference>
<dbReference type="PaxDb" id="3702-AT4G27110.1"/>
<dbReference type="ProteomicsDB" id="223929"/>
<dbReference type="EnsemblPlants" id="AT4G27110.1">
    <property type="protein sequence ID" value="AT4G27110.1"/>
    <property type="gene ID" value="AT4G27110"/>
</dbReference>
<dbReference type="GeneID" id="828819"/>
<dbReference type="Gramene" id="AT4G27110.1">
    <property type="protein sequence ID" value="AT4G27110.1"/>
    <property type="gene ID" value="AT4G27110"/>
</dbReference>
<dbReference type="KEGG" id="ath:AT4G27110"/>
<dbReference type="Araport" id="AT4G27110"/>
<dbReference type="TAIR" id="AT4G27110">
    <property type="gene designation" value="COBL11"/>
</dbReference>
<dbReference type="eggNOG" id="ENOG502QUPM">
    <property type="taxonomic scope" value="Eukaryota"/>
</dbReference>
<dbReference type="HOGENOM" id="CLU_420019_0_0_1"/>
<dbReference type="InParanoid" id="Q9T045"/>
<dbReference type="OMA" id="HHREIIV"/>
<dbReference type="OrthoDB" id="2014623at2759"/>
<dbReference type="PhylomeDB" id="Q9T045"/>
<dbReference type="PRO" id="PR:Q9T045"/>
<dbReference type="Proteomes" id="UP000006548">
    <property type="component" value="Chromosome 4"/>
</dbReference>
<dbReference type="ExpressionAtlas" id="Q9T045">
    <property type="expression patterns" value="baseline and differential"/>
</dbReference>
<dbReference type="GO" id="GO:0016324">
    <property type="term" value="C:apical plasma membrane"/>
    <property type="evidence" value="ECO:0000314"/>
    <property type="project" value="UniProtKB"/>
</dbReference>
<dbReference type="GO" id="GO:0098552">
    <property type="term" value="C:side of membrane"/>
    <property type="evidence" value="ECO:0007669"/>
    <property type="project" value="UniProtKB-KW"/>
</dbReference>
<dbReference type="GO" id="GO:0031982">
    <property type="term" value="C:vesicle"/>
    <property type="evidence" value="ECO:0000314"/>
    <property type="project" value="UniProtKB"/>
</dbReference>
<dbReference type="GO" id="GO:0071555">
    <property type="term" value="P:cell wall organization"/>
    <property type="evidence" value="ECO:0000315"/>
    <property type="project" value="UniProtKB"/>
</dbReference>
<dbReference type="GO" id="GO:0010215">
    <property type="term" value="P:cellulose microfibril organization"/>
    <property type="evidence" value="ECO:0007669"/>
    <property type="project" value="InterPro"/>
</dbReference>
<dbReference type="GO" id="GO:0009860">
    <property type="term" value="P:pollen tube growth"/>
    <property type="evidence" value="ECO:0000315"/>
    <property type="project" value="UniProtKB"/>
</dbReference>
<dbReference type="GO" id="GO:0010183">
    <property type="term" value="P:pollen tube guidance"/>
    <property type="evidence" value="ECO:0000315"/>
    <property type="project" value="UniProtKB"/>
</dbReference>
<dbReference type="InterPro" id="IPR056900">
    <property type="entry name" value="COB_C"/>
</dbReference>
<dbReference type="InterPro" id="IPR006918">
    <property type="entry name" value="COBRA_pln"/>
</dbReference>
<dbReference type="PANTHER" id="PTHR31052:SF14">
    <property type="entry name" value="COBRA-LIKE PROTEIN 11"/>
    <property type="match status" value="1"/>
</dbReference>
<dbReference type="PANTHER" id="PTHR31052">
    <property type="entry name" value="COBRA-LIKE PROTEIN 7"/>
    <property type="match status" value="1"/>
</dbReference>
<dbReference type="Pfam" id="PF25079">
    <property type="entry name" value="COB_C"/>
    <property type="match status" value="1"/>
</dbReference>
<dbReference type="Pfam" id="PF04833">
    <property type="entry name" value="COBRA"/>
    <property type="match status" value="1"/>
</dbReference>
<protein>
    <recommendedName>
        <fullName evidence="5">COBRA-like protein 11</fullName>
    </recommendedName>
    <alternativeName>
        <fullName evidence="6">Protein POLLEN SPECIFIC GENE 4</fullName>
    </alternativeName>
</protein>